<reference key="1">
    <citation type="journal article" date="1993" name="J. Biol. Chem.">
        <title>Organization, sequence, and expression of the murine S100 beta gene. Transcriptional regulation by cell type-specific cis-acting regulatory elements.</title>
        <authorList>
            <person name="Jiang H."/>
            <person name="Shah S."/>
            <person name="Hilt D.C."/>
        </authorList>
    </citation>
    <scope>NUCLEOTIDE SEQUENCE [GENOMIC DNA]</scope>
    <source>
        <strain>BALB/cJ</strain>
    </source>
</reference>
<reference key="2">
    <citation type="journal article" date="2004" name="Genome Res.">
        <title>The status, quality, and expansion of the NIH full-length cDNA project: the Mammalian Gene Collection (MGC).</title>
        <authorList>
            <consortium name="The MGC Project Team"/>
        </authorList>
    </citation>
    <scope>NUCLEOTIDE SEQUENCE [LARGE SCALE MRNA]</scope>
    <source>
        <tissue>Brain</tissue>
    </source>
</reference>
<reference key="3">
    <citation type="journal article" date="2010" name="Cell">
        <title>A tissue-specific atlas of mouse protein phosphorylation and expression.</title>
        <authorList>
            <person name="Huttlin E.L."/>
            <person name="Jedrychowski M.P."/>
            <person name="Elias J.E."/>
            <person name="Goswami T."/>
            <person name="Rad R."/>
            <person name="Beausoleil S.A."/>
            <person name="Villen J."/>
            <person name="Haas W."/>
            <person name="Sowa M.E."/>
            <person name="Gygi S.P."/>
        </authorList>
    </citation>
    <scope>IDENTIFICATION BY MASS SPECTROMETRY [LARGE SCALE ANALYSIS]</scope>
    <source>
        <tissue>Brain</tissue>
        <tissue>Brown adipose tissue</tissue>
        <tissue>Testis</tissue>
    </source>
</reference>
<reference key="4">
    <citation type="journal article" date="1989" name="J. Cell Biol.">
        <title>Neurite extension and neuronal survival activities of recombinant S100 beta proteins that differ in the content and position of cysteine residues.</title>
        <authorList>
            <person name="Winningham-Major F."/>
            <person name="Staecker J.L."/>
            <person name="Barger S.W."/>
            <person name="Coats S."/>
            <person name="Van Eldik L.J."/>
        </authorList>
    </citation>
    <scope>FUNCTION</scope>
</reference>
<reference key="5">
    <citation type="journal article" date="1994" name="Proc. Natl. Acad. Sci. U.S.A.">
        <title>Astrocytosis and axonal proliferation in the hippocampus of S100b transgenic mice.</title>
        <authorList>
            <person name="Reeves R.H."/>
            <person name="Yao J."/>
            <person name="Crowley M.R."/>
            <person name="Buck S."/>
            <person name="Zhang X."/>
            <person name="Yarowsky P."/>
            <person name="Gearhart J.D."/>
            <person name="Hilt D.C."/>
        </authorList>
    </citation>
    <scope>FUNCTION</scope>
</reference>
<reference key="6">
    <citation type="journal article" date="2019" name="Nature">
        <title>Innervation of thermogenic adipose tissue via a calsyntenin 3beta-S100b axis.</title>
        <authorList>
            <person name="Zeng X."/>
            <person name="Ye M."/>
            <person name="Resch J.M."/>
            <person name="Jedrychowski M.P."/>
            <person name="Hu B."/>
            <person name="Lowell B.B."/>
            <person name="Ginty D.D."/>
            <person name="Spiegelman B.M."/>
        </authorList>
    </citation>
    <scope>FUNCTION</scope>
    <scope>SUBCELLULAR LOCATION</scope>
    <scope>INTERACTION WITH CLSTN3BETA OF CLSTN3</scope>
</reference>
<name>S100B_MOUSE</name>
<sequence>MSELEKAMVALIDVFHQYSGREGDKHKLKKSELKELINNELSHFLEEIKEQEVVDKVMETLDEDGDGECDFQEFMAFVAMVTTACHEFFEHE</sequence>
<feature type="initiator methionine" description="Removed" evidence="1">
    <location>
        <position position="1"/>
    </location>
</feature>
<feature type="chain" id="PRO_0000143967" description="Protein S100-B">
    <location>
        <begin position="2"/>
        <end position="92"/>
    </location>
</feature>
<feature type="domain" description="EF-hand 1" evidence="10">
    <location>
        <begin position="13"/>
        <end position="48"/>
    </location>
</feature>
<feature type="domain" description="EF-hand 2" evidence="4">
    <location>
        <begin position="49"/>
        <end position="84"/>
    </location>
</feature>
<feature type="binding site" evidence="2">
    <location>
        <position position="16"/>
    </location>
    <ligand>
        <name>Zn(2+)</name>
        <dbReference type="ChEBI" id="CHEBI:29105"/>
    </ligand>
</feature>
<feature type="binding site" evidence="2">
    <location>
        <position position="19"/>
    </location>
    <ligand>
        <name>Ca(2+)</name>
        <dbReference type="ChEBI" id="CHEBI:29108"/>
        <label>1</label>
        <note>low affinity</note>
    </ligand>
</feature>
<feature type="binding site" evidence="2">
    <location>
        <position position="22"/>
    </location>
    <ligand>
        <name>Ca(2+)</name>
        <dbReference type="ChEBI" id="CHEBI:29108"/>
        <label>1</label>
        <note>low affinity</note>
    </ligand>
</feature>
<feature type="binding site" evidence="2">
    <location>
        <position position="24"/>
    </location>
    <ligand>
        <name>Ca(2+)</name>
        <dbReference type="ChEBI" id="CHEBI:29108"/>
        <label>1</label>
        <note>low affinity</note>
    </ligand>
</feature>
<feature type="binding site" evidence="2">
    <location>
        <position position="26"/>
    </location>
    <ligand>
        <name>Zn(2+)</name>
        <dbReference type="ChEBI" id="CHEBI:29105"/>
    </ligand>
</feature>
<feature type="binding site" evidence="4">
    <location>
        <position position="62"/>
    </location>
    <ligand>
        <name>Ca(2+)</name>
        <dbReference type="ChEBI" id="CHEBI:29108"/>
        <label>2</label>
        <note>high affinity</note>
    </ligand>
</feature>
<feature type="binding site" evidence="4">
    <location>
        <position position="64"/>
    </location>
    <ligand>
        <name>Ca(2+)</name>
        <dbReference type="ChEBI" id="CHEBI:29108"/>
        <label>2</label>
        <note>high affinity</note>
    </ligand>
</feature>
<feature type="binding site" evidence="4">
    <location>
        <position position="66"/>
    </location>
    <ligand>
        <name>Ca(2+)</name>
        <dbReference type="ChEBI" id="CHEBI:29108"/>
        <label>2</label>
        <note>high affinity</note>
    </ligand>
</feature>
<feature type="binding site" evidence="4">
    <location>
        <position position="68"/>
    </location>
    <ligand>
        <name>Ca(2+)</name>
        <dbReference type="ChEBI" id="CHEBI:29108"/>
        <label>2</label>
        <note>high affinity</note>
    </ligand>
</feature>
<feature type="binding site" evidence="4">
    <location>
        <position position="73"/>
    </location>
    <ligand>
        <name>Ca(2+)</name>
        <dbReference type="ChEBI" id="CHEBI:29108"/>
        <label>2</label>
        <note>high affinity</note>
    </ligand>
</feature>
<feature type="binding site" evidence="2">
    <location>
        <position position="86"/>
    </location>
    <ligand>
        <name>Zn(2+)</name>
        <dbReference type="ChEBI" id="CHEBI:29105"/>
    </ligand>
</feature>
<feature type="binding site" evidence="2">
    <location>
        <position position="91"/>
    </location>
    <ligand>
        <name>Zn(2+)</name>
        <dbReference type="ChEBI" id="CHEBI:29105"/>
    </ligand>
</feature>
<feature type="modified residue" description="N-acetylserine" evidence="1">
    <location>
        <position position="2"/>
    </location>
</feature>
<evidence type="ECO:0000250" key="1">
    <source>
        <dbReference type="UniProtKB" id="P02638"/>
    </source>
</evidence>
<evidence type="ECO:0000250" key="2">
    <source>
        <dbReference type="UniProtKB" id="P04271"/>
    </source>
</evidence>
<evidence type="ECO:0000250" key="3">
    <source>
        <dbReference type="UniProtKB" id="P04631"/>
    </source>
</evidence>
<evidence type="ECO:0000255" key="4">
    <source>
        <dbReference type="PROSITE-ProRule" id="PRU00448"/>
    </source>
</evidence>
<evidence type="ECO:0000269" key="5">
    <source>
    </source>
</evidence>
<evidence type="ECO:0000269" key="6">
    <source>
    </source>
</evidence>
<evidence type="ECO:0000269" key="7">
    <source>
    </source>
</evidence>
<evidence type="ECO:0000303" key="8">
    <source>
    </source>
</evidence>
<evidence type="ECO:0000303" key="9">
    <source>
    </source>
</evidence>
<evidence type="ECO:0000305" key="10"/>
<evidence type="ECO:0000312" key="11">
    <source>
        <dbReference type="MGI" id="MGI:98217"/>
    </source>
</evidence>
<protein>
    <recommendedName>
        <fullName evidence="10">Protein S100-B</fullName>
    </recommendedName>
    <alternativeName>
        <fullName evidence="9">S-100 protein beta chain</fullName>
    </alternativeName>
    <alternativeName>
        <fullName>S-100 protein subunit beta</fullName>
    </alternativeName>
    <alternativeName>
        <fullName>S100 calcium-binding protein B</fullName>
    </alternativeName>
</protein>
<keyword id="KW-0007">Acetylation</keyword>
<keyword id="KW-0106">Calcium</keyword>
<keyword id="KW-0130">Cell adhesion</keyword>
<keyword id="KW-0963">Cytoplasm</keyword>
<keyword id="KW-0479">Metal-binding</keyword>
<keyword id="KW-0539">Nucleus</keyword>
<keyword id="KW-1185">Reference proteome</keyword>
<keyword id="KW-0677">Repeat</keyword>
<keyword id="KW-0964">Secreted</keyword>
<keyword id="KW-0862">Zinc</keyword>
<organism>
    <name type="scientific">Mus musculus</name>
    <name type="common">Mouse</name>
    <dbReference type="NCBI Taxonomy" id="10090"/>
    <lineage>
        <taxon>Eukaryota</taxon>
        <taxon>Metazoa</taxon>
        <taxon>Chordata</taxon>
        <taxon>Craniata</taxon>
        <taxon>Vertebrata</taxon>
        <taxon>Euteleostomi</taxon>
        <taxon>Mammalia</taxon>
        <taxon>Eutheria</taxon>
        <taxon>Euarchontoglires</taxon>
        <taxon>Glires</taxon>
        <taxon>Rodentia</taxon>
        <taxon>Myomorpha</taxon>
        <taxon>Muroidea</taxon>
        <taxon>Muridae</taxon>
        <taxon>Murinae</taxon>
        <taxon>Mus</taxon>
        <taxon>Mus</taxon>
    </lineage>
</organism>
<gene>
    <name evidence="8 11" type="primary">S100b</name>
</gene>
<dbReference type="EMBL" id="L22144">
    <property type="protein sequence ID" value="AAA03075.1"/>
    <property type="molecule type" value="Unassigned_DNA"/>
</dbReference>
<dbReference type="EMBL" id="BC061178">
    <property type="protein sequence ID" value="AAH61178.1"/>
    <property type="molecule type" value="mRNA"/>
</dbReference>
<dbReference type="CCDS" id="CCDS35943.1"/>
<dbReference type="PIR" id="A48015">
    <property type="entry name" value="A48015"/>
</dbReference>
<dbReference type="RefSeq" id="NP_033141.1">
    <property type="nucleotide sequence ID" value="NM_009115.3"/>
</dbReference>
<dbReference type="BMRB" id="P50114"/>
<dbReference type="SMR" id="P50114"/>
<dbReference type="BioGRID" id="203058">
    <property type="interactions" value="7"/>
</dbReference>
<dbReference type="FunCoup" id="P50114">
    <property type="interactions" value="157"/>
</dbReference>
<dbReference type="IntAct" id="P50114">
    <property type="interactions" value="1"/>
</dbReference>
<dbReference type="STRING" id="10090.ENSMUSP00000047968"/>
<dbReference type="PhosphoSitePlus" id="P50114"/>
<dbReference type="SwissPalm" id="P50114"/>
<dbReference type="PaxDb" id="10090-ENSMUSP00000047968"/>
<dbReference type="PeptideAtlas" id="P50114"/>
<dbReference type="ProteomicsDB" id="255430"/>
<dbReference type="ABCD" id="P50114">
    <property type="antibodies" value="1 sequenced antibody"/>
</dbReference>
<dbReference type="DNASU" id="20203"/>
<dbReference type="Ensembl" id="ENSMUST00000036387.8">
    <property type="protein sequence ID" value="ENSMUSP00000047968.8"/>
    <property type="gene ID" value="ENSMUSG00000033208.8"/>
</dbReference>
<dbReference type="GeneID" id="20203"/>
<dbReference type="KEGG" id="mmu:20203"/>
<dbReference type="UCSC" id="uc007fuc.2">
    <property type="organism name" value="mouse"/>
</dbReference>
<dbReference type="AGR" id="MGI:98217"/>
<dbReference type="CTD" id="6285"/>
<dbReference type="MGI" id="MGI:98217">
    <property type="gene designation" value="S100b"/>
</dbReference>
<dbReference type="VEuPathDB" id="HostDB:ENSMUSG00000033208"/>
<dbReference type="eggNOG" id="ENOG502S4HJ">
    <property type="taxonomic scope" value="Eukaryota"/>
</dbReference>
<dbReference type="GeneTree" id="ENSGT00940000161997"/>
<dbReference type="HOGENOM" id="CLU_138624_2_0_1"/>
<dbReference type="InParanoid" id="P50114"/>
<dbReference type="OMA" id="MMAIIET"/>
<dbReference type="OrthoDB" id="9903855at2759"/>
<dbReference type="PhylomeDB" id="P50114"/>
<dbReference type="TreeFam" id="TF332727"/>
<dbReference type="Reactome" id="R-MMU-445989">
    <property type="pathway name" value="TAK1-dependent IKK and NF-kappa-B activation"/>
</dbReference>
<dbReference type="Reactome" id="R-MMU-879415">
    <property type="pathway name" value="Advanced glycosylation endproduct receptor signaling"/>
</dbReference>
<dbReference type="Reactome" id="R-MMU-933542">
    <property type="pathway name" value="TRAF6 mediated NF-kB activation"/>
</dbReference>
<dbReference type="BioGRID-ORCS" id="20203">
    <property type="hits" value="6 hits in 81 CRISPR screens"/>
</dbReference>
<dbReference type="ChiTaRS" id="S100b">
    <property type="organism name" value="mouse"/>
</dbReference>
<dbReference type="PRO" id="PR:P50114"/>
<dbReference type="Proteomes" id="UP000000589">
    <property type="component" value="Chromosome 10"/>
</dbReference>
<dbReference type="RNAct" id="P50114">
    <property type="molecule type" value="protein"/>
</dbReference>
<dbReference type="Bgee" id="ENSMUSG00000033208">
    <property type="expression patterns" value="Expressed in vestibular membrane of cochlear duct and 159 other cell types or tissues"/>
</dbReference>
<dbReference type="ExpressionAtlas" id="P50114">
    <property type="expression patterns" value="baseline and differential"/>
</dbReference>
<dbReference type="GO" id="GO:0036064">
    <property type="term" value="C:ciliary basal body"/>
    <property type="evidence" value="ECO:0007669"/>
    <property type="project" value="Ensembl"/>
</dbReference>
<dbReference type="GO" id="GO:0005737">
    <property type="term" value="C:cytoplasm"/>
    <property type="evidence" value="ECO:0000314"/>
    <property type="project" value="MGI"/>
</dbReference>
<dbReference type="GO" id="GO:0005829">
    <property type="term" value="C:cytosol"/>
    <property type="evidence" value="ECO:0007669"/>
    <property type="project" value="Ensembl"/>
</dbReference>
<dbReference type="GO" id="GO:0005576">
    <property type="term" value="C:extracellular region"/>
    <property type="evidence" value="ECO:0000314"/>
    <property type="project" value="UniProtKB"/>
</dbReference>
<dbReference type="GO" id="GO:0005615">
    <property type="term" value="C:extracellular space"/>
    <property type="evidence" value="ECO:0007669"/>
    <property type="project" value="Ensembl"/>
</dbReference>
<dbReference type="GO" id="GO:0043025">
    <property type="term" value="C:neuronal cell body"/>
    <property type="evidence" value="ECO:0000314"/>
    <property type="project" value="MGI"/>
</dbReference>
<dbReference type="GO" id="GO:0005654">
    <property type="term" value="C:nucleoplasm"/>
    <property type="evidence" value="ECO:0007669"/>
    <property type="project" value="Ensembl"/>
</dbReference>
<dbReference type="GO" id="GO:0005634">
    <property type="term" value="C:nucleus"/>
    <property type="evidence" value="ECO:0000314"/>
    <property type="project" value="MGI"/>
</dbReference>
<dbReference type="GO" id="GO:0048471">
    <property type="term" value="C:perinuclear region of cytoplasm"/>
    <property type="evidence" value="ECO:0007669"/>
    <property type="project" value="Ensembl"/>
</dbReference>
<dbReference type="GO" id="GO:0001726">
    <property type="term" value="C:ruffle"/>
    <property type="evidence" value="ECO:0007669"/>
    <property type="project" value="Ensembl"/>
</dbReference>
<dbReference type="GO" id="GO:0005509">
    <property type="term" value="F:calcium ion binding"/>
    <property type="evidence" value="ECO:0000303"/>
    <property type="project" value="UniProtKB"/>
</dbReference>
<dbReference type="GO" id="GO:0048306">
    <property type="term" value="F:calcium-dependent protein binding"/>
    <property type="evidence" value="ECO:0007669"/>
    <property type="project" value="Ensembl"/>
</dbReference>
<dbReference type="GO" id="GO:0042803">
    <property type="term" value="F:protein homodimerization activity"/>
    <property type="evidence" value="ECO:0000250"/>
    <property type="project" value="UniProtKB"/>
</dbReference>
<dbReference type="GO" id="GO:0050786">
    <property type="term" value="F:RAGE receptor binding"/>
    <property type="evidence" value="ECO:0007669"/>
    <property type="project" value="Ensembl"/>
</dbReference>
<dbReference type="GO" id="GO:0044548">
    <property type="term" value="F:S100 protein binding"/>
    <property type="evidence" value="ECO:0000250"/>
    <property type="project" value="UniProtKB"/>
</dbReference>
<dbReference type="GO" id="GO:0048156">
    <property type="term" value="F:tau protein binding"/>
    <property type="evidence" value="ECO:0000250"/>
    <property type="project" value="UniProtKB"/>
</dbReference>
<dbReference type="GO" id="GO:0008270">
    <property type="term" value="F:zinc ion binding"/>
    <property type="evidence" value="ECO:0000250"/>
    <property type="project" value="UniProtKB"/>
</dbReference>
<dbReference type="GO" id="GO:1990845">
    <property type="term" value="P:adaptive thermogenesis"/>
    <property type="evidence" value="ECO:0000314"/>
    <property type="project" value="UniProtKB"/>
</dbReference>
<dbReference type="GO" id="GO:0048708">
    <property type="term" value="P:astrocyte differentiation"/>
    <property type="evidence" value="ECO:0007669"/>
    <property type="project" value="Ensembl"/>
</dbReference>
<dbReference type="GO" id="GO:0007155">
    <property type="term" value="P:cell adhesion"/>
    <property type="evidence" value="ECO:0007669"/>
    <property type="project" value="UniProtKB-KW"/>
</dbReference>
<dbReference type="GO" id="GO:0071456">
    <property type="term" value="P:cellular response to hypoxia"/>
    <property type="evidence" value="ECO:0007669"/>
    <property type="project" value="Ensembl"/>
</dbReference>
<dbReference type="GO" id="GO:0006112">
    <property type="term" value="P:energy reserve metabolic process"/>
    <property type="evidence" value="ECO:0000303"/>
    <property type="project" value="UniProtKB"/>
</dbReference>
<dbReference type="GO" id="GO:0006874">
    <property type="term" value="P:intracellular calcium ion homeostasis"/>
    <property type="evidence" value="ECO:0000303"/>
    <property type="project" value="UniProtKB"/>
</dbReference>
<dbReference type="GO" id="GO:0007611">
    <property type="term" value="P:learning or memory"/>
    <property type="evidence" value="ECO:0000315"/>
    <property type="project" value="UniProtKB"/>
</dbReference>
<dbReference type="GO" id="GO:0060291">
    <property type="term" value="P:long-term synaptic potentiation"/>
    <property type="evidence" value="ECO:0007669"/>
    <property type="project" value="Ensembl"/>
</dbReference>
<dbReference type="GO" id="GO:0007613">
    <property type="term" value="P:memory"/>
    <property type="evidence" value="ECO:0000315"/>
    <property type="project" value="MGI"/>
</dbReference>
<dbReference type="GO" id="GO:2001015">
    <property type="term" value="P:negative regulation of skeletal muscle cell differentiation"/>
    <property type="evidence" value="ECO:0007669"/>
    <property type="project" value="Ensembl"/>
</dbReference>
<dbReference type="GO" id="GO:1990138">
    <property type="term" value="P:neuron projection extension"/>
    <property type="evidence" value="ECO:0000314"/>
    <property type="project" value="UniProtKB"/>
</dbReference>
<dbReference type="GO" id="GO:0043065">
    <property type="term" value="P:positive regulation of apoptotic process"/>
    <property type="evidence" value="ECO:0007669"/>
    <property type="project" value="Ensembl"/>
</dbReference>
<dbReference type="GO" id="GO:0043123">
    <property type="term" value="P:positive regulation of canonical NF-kappaB signal transduction"/>
    <property type="evidence" value="ECO:0007669"/>
    <property type="project" value="Ensembl"/>
</dbReference>
<dbReference type="GO" id="GO:0008284">
    <property type="term" value="P:positive regulation of cell population proliferation"/>
    <property type="evidence" value="ECO:0007669"/>
    <property type="project" value="Ensembl"/>
</dbReference>
<dbReference type="GO" id="GO:0031643">
    <property type="term" value="P:positive regulation of myelination"/>
    <property type="evidence" value="ECO:0007669"/>
    <property type="project" value="Ensembl"/>
</dbReference>
<dbReference type="GO" id="GO:0045666">
    <property type="term" value="P:positive regulation of neuron differentiation"/>
    <property type="evidence" value="ECO:0000314"/>
    <property type="project" value="UniProtKB"/>
</dbReference>
<dbReference type="GO" id="GO:0008360">
    <property type="term" value="P:regulation of cell shape"/>
    <property type="evidence" value="ECO:0007669"/>
    <property type="project" value="Ensembl"/>
</dbReference>
<dbReference type="GO" id="GO:0001817">
    <property type="term" value="P:regulation of cytokine production"/>
    <property type="evidence" value="ECO:0000303"/>
    <property type="project" value="UniProtKB"/>
</dbReference>
<dbReference type="GO" id="GO:0048169">
    <property type="term" value="P:regulation of long-term neuronal synaptic plasticity"/>
    <property type="evidence" value="ECO:0000303"/>
    <property type="project" value="UniProtKB"/>
</dbReference>
<dbReference type="GO" id="GO:0048168">
    <property type="term" value="P:regulation of neuronal synaptic plasticity"/>
    <property type="evidence" value="ECO:0000315"/>
    <property type="project" value="MGI"/>
</dbReference>
<dbReference type="GO" id="GO:0072347">
    <property type="term" value="P:response to anesthetic"/>
    <property type="evidence" value="ECO:0007669"/>
    <property type="project" value="Ensembl"/>
</dbReference>
<dbReference type="GO" id="GO:0051384">
    <property type="term" value="P:response to glucocorticoid"/>
    <property type="evidence" value="ECO:0007669"/>
    <property type="project" value="Ensembl"/>
</dbReference>
<dbReference type="GO" id="GO:0051597">
    <property type="term" value="P:response to methylmercury"/>
    <property type="evidence" value="ECO:0007669"/>
    <property type="project" value="Ensembl"/>
</dbReference>
<dbReference type="GO" id="GO:0097490">
    <property type="term" value="P:sympathetic neuron projection extension"/>
    <property type="evidence" value="ECO:0000314"/>
    <property type="project" value="UniProtKB"/>
</dbReference>
<dbReference type="CDD" id="cd05027">
    <property type="entry name" value="S-100B"/>
    <property type="match status" value="1"/>
</dbReference>
<dbReference type="FunFam" id="1.10.238.10:FF:000044">
    <property type="entry name" value="Protein S100"/>
    <property type="match status" value="1"/>
</dbReference>
<dbReference type="Gene3D" id="1.10.238.10">
    <property type="entry name" value="EF-hand"/>
    <property type="match status" value="1"/>
</dbReference>
<dbReference type="InterPro" id="IPR011992">
    <property type="entry name" value="EF-hand-dom_pair"/>
</dbReference>
<dbReference type="InterPro" id="IPR018247">
    <property type="entry name" value="EF_Hand_1_Ca_BS"/>
</dbReference>
<dbReference type="InterPro" id="IPR002048">
    <property type="entry name" value="EF_hand_dom"/>
</dbReference>
<dbReference type="InterPro" id="IPR028481">
    <property type="entry name" value="S100-B"/>
</dbReference>
<dbReference type="InterPro" id="IPR001751">
    <property type="entry name" value="S100/CaBP7/8-like_CS"/>
</dbReference>
<dbReference type="InterPro" id="IPR013787">
    <property type="entry name" value="S100_Ca-bd_sub"/>
</dbReference>
<dbReference type="PANTHER" id="PTHR11639:SF134">
    <property type="entry name" value="PROTEIN S100-A1-RELATED"/>
    <property type="match status" value="1"/>
</dbReference>
<dbReference type="PANTHER" id="PTHR11639">
    <property type="entry name" value="S100 CALCIUM-BINDING PROTEIN"/>
    <property type="match status" value="1"/>
</dbReference>
<dbReference type="Pfam" id="PF00036">
    <property type="entry name" value="EF-hand_1"/>
    <property type="match status" value="1"/>
</dbReference>
<dbReference type="Pfam" id="PF01023">
    <property type="entry name" value="S_100"/>
    <property type="match status" value="1"/>
</dbReference>
<dbReference type="SMART" id="SM00054">
    <property type="entry name" value="EFh"/>
    <property type="match status" value="1"/>
</dbReference>
<dbReference type="SMART" id="SM01394">
    <property type="entry name" value="S_100"/>
    <property type="match status" value="1"/>
</dbReference>
<dbReference type="SUPFAM" id="SSF47473">
    <property type="entry name" value="EF-hand"/>
    <property type="match status" value="1"/>
</dbReference>
<dbReference type="PROSITE" id="PS00018">
    <property type="entry name" value="EF_HAND_1"/>
    <property type="match status" value="1"/>
</dbReference>
<dbReference type="PROSITE" id="PS50222">
    <property type="entry name" value="EF_HAND_2"/>
    <property type="match status" value="1"/>
</dbReference>
<dbReference type="PROSITE" id="PS00303">
    <property type="entry name" value="S100_CABP"/>
    <property type="match status" value="1"/>
</dbReference>
<comment type="function">
    <text evidence="1 2 3 5 6 7">Small zinc- and- and calcium-binding protein that is highly expressed in astrocytes and constitutes one of the most abundant soluble proteins in brain (By similarity). Weakly binds calcium but binds zinc very tightly-distinct binding sites with different affinities exist for both ions on each monomer (By similarity). Physiological concentrations of potassium ion antagonize the binding of both divalent cations, especially affecting high-affinity calcium-binding sites (By similarity). Acts as a neurotrophic factor that promotes astrocytosis and axonal proliferation (PubMed:2592414, PubMed:8202493). Involved in innervation of thermogenic adipose tissue by acting as an adipocyte-derived neurotrophic factor that promotes sympathetic innervation of adipose tissue (PubMed:31043739). Binds to and initiates the activation of STK38 by releasing autoinhibitory intramolecular interactions within the kinase (By similarity). Interaction with AGER after myocardial infarction may play a role in myocyte apoptosis by activating ERK1/2 and p53/TP53 signaling (By similarity). Could assist ATAD3A cytoplasmic processing, preventing aggregation and favoring mitochondrial localization (By similarity). May mediate calcium-dependent regulation on many physiological processes by interacting with other proteins, such as TPR-containing proteins, and modulating their activity (By similarity).</text>
</comment>
<comment type="subunit">
    <text evidence="1 2 3 6">Dimer of either two alpha chains, or two beta chains, or one alpha and one beta chain (By similarity). The S100B dimer binds two molecules of STK38 (By similarity). Interacts with CACYBP in a calcium-dependent manner (By similarity). Interacts with ATAD3A; this interaction probably occurs in the cytosol prior to ATAD3A mitochondrial targeting (By similarity). Interacts with S100A6 (By similarity). The S100B dimer interacts with two molecules of CAPZA1 (By similarity). Interacts with AGER (By similarity). Interacts with PPP5C (via TPR repeats); the interaction is calcium-dependent and modulates PPP5C activity (By similarity). Interacts with TPPP; this interaction inhibits TPPP dimerization (By similarity). Interacts with isoform CLSTN3beta of CLSTN3; interaction promotes secretion (PubMed:31043739).</text>
</comment>
<comment type="subcellular location">
    <subcellularLocation>
        <location evidence="2">Cytoplasm</location>
    </subcellularLocation>
    <subcellularLocation>
        <location evidence="2">Nucleus</location>
    </subcellularLocation>
    <subcellularLocation>
        <location evidence="6">Secreted</location>
    </subcellularLocation>
    <text evidence="6">Secretion into the medium is promoted by interaction with isoform CLSTN3beta of CLSTN3.</text>
</comment>
<comment type="similarity">
    <text evidence="10">Belongs to the S-100 family.</text>
</comment>
<proteinExistence type="evidence at protein level"/>
<accession>P50114</accession>